<name>HSLV_SHISS</name>
<gene>
    <name evidence="1" type="primary">hslV</name>
    <name type="ordered locus">SSON_4101</name>
</gene>
<organism>
    <name type="scientific">Shigella sonnei (strain Ss046)</name>
    <dbReference type="NCBI Taxonomy" id="300269"/>
    <lineage>
        <taxon>Bacteria</taxon>
        <taxon>Pseudomonadati</taxon>
        <taxon>Pseudomonadota</taxon>
        <taxon>Gammaproteobacteria</taxon>
        <taxon>Enterobacterales</taxon>
        <taxon>Enterobacteriaceae</taxon>
        <taxon>Shigella</taxon>
    </lineage>
</organism>
<reference key="1">
    <citation type="journal article" date="2005" name="Nucleic Acids Res.">
        <title>Genome dynamics and diversity of Shigella species, the etiologic agents of bacillary dysentery.</title>
        <authorList>
            <person name="Yang F."/>
            <person name="Yang J."/>
            <person name="Zhang X."/>
            <person name="Chen L."/>
            <person name="Jiang Y."/>
            <person name="Yan Y."/>
            <person name="Tang X."/>
            <person name="Wang J."/>
            <person name="Xiong Z."/>
            <person name="Dong J."/>
            <person name="Xue Y."/>
            <person name="Zhu Y."/>
            <person name="Xu X."/>
            <person name="Sun L."/>
            <person name="Chen S."/>
            <person name="Nie H."/>
            <person name="Peng J."/>
            <person name="Xu J."/>
            <person name="Wang Y."/>
            <person name="Yuan Z."/>
            <person name="Wen Y."/>
            <person name="Yao Z."/>
            <person name="Shen Y."/>
            <person name="Qiang B."/>
            <person name="Hou Y."/>
            <person name="Yu J."/>
            <person name="Jin Q."/>
        </authorList>
    </citation>
    <scope>NUCLEOTIDE SEQUENCE [LARGE SCALE GENOMIC DNA]</scope>
    <source>
        <strain>Ss046</strain>
    </source>
</reference>
<comment type="function">
    <text evidence="1">Protease subunit of a proteasome-like degradation complex believed to be a general protein degrading machinery.</text>
</comment>
<comment type="catalytic activity">
    <reaction evidence="1">
        <text>ATP-dependent cleavage of peptide bonds with broad specificity.</text>
        <dbReference type="EC" id="3.4.25.2"/>
    </reaction>
</comment>
<comment type="activity regulation">
    <text evidence="1">Allosterically activated by HslU binding.</text>
</comment>
<comment type="subunit">
    <text evidence="1">A double ring-shaped homohexamer of HslV is capped on each side by a ring-shaped HslU homohexamer. The assembly of the HslU/HslV complex is dependent on binding of ATP.</text>
</comment>
<comment type="subcellular location">
    <subcellularLocation>
        <location evidence="1">Cytoplasm</location>
    </subcellularLocation>
</comment>
<comment type="induction">
    <text evidence="1">By heat shock.</text>
</comment>
<comment type="similarity">
    <text evidence="1">Belongs to the peptidase T1B family. HslV subfamily.</text>
</comment>
<evidence type="ECO:0000255" key="1">
    <source>
        <dbReference type="HAMAP-Rule" id="MF_00248"/>
    </source>
</evidence>
<feature type="chain" id="PRO_1000012677" description="ATP-dependent protease subunit HslV">
    <location>
        <begin position="1"/>
        <end position="176"/>
    </location>
</feature>
<feature type="active site" evidence="1">
    <location>
        <position position="2"/>
    </location>
</feature>
<feature type="binding site" evidence="1">
    <location>
        <position position="157"/>
    </location>
    <ligand>
        <name>Na(+)</name>
        <dbReference type="ChEBI" id="CHEBI:29101"/>
    </ligand>
</feature>
<feature type="binding site" evidence="1">
    <location>
        <position position="160"/>
    </location>
    <ligand>
        <name>Na(+)</name>
        <dbReference type="ChEBI" id="CHEBI:29101"/>
    </ligand>
</feature>
<feature type="binding site" evidence="1">
    <location>
        <position position="163"/>
    </location>
    <ligand>
        <name>Na(+)</name>
        <dbReference type="ChEBI" id="CHEBI:29101"/>
    </ligand>
</feature>
<keyword id="KW-0021">Allosteric enzyme</keyword>
<keyword id="KW-0963">Cytoplasm</keyword>
<keyword id="KW-0378">Hydrolase</keyword>
<keyword id="KW-0479">Metal-binding</keyword>
<keyword id="KW-0645">Protease</keyword>
<keyword id="KW-1185">Reference proteome</keyword>
<keyword id="KW-0915">Sodium</keyword>
<keyword id="KW-0346">Stress response</keyword>
<keyword id="KW-0888">Threonine protease</keyword>
<proteinExistence type="inferred from homology"/>
<accession>Q3YV46</accession>
<protein>
    <recommendedName>
        <fullName evidence="1">ATP-dependent protease subunit HslV</fullName>
        <ecNumber evidence="1">3.4.25.2</ecNumber>
    </recommendedName>
    <alternativeName>
        <fullName evidence="1">Heat shock protein HslV</fullName>
    </alternativeName>
</protein>
<dbReference type="EC" id="3.4.25.2" evidence="1"/>
<dbReference type="EMBL" id="CP000038">
    <property type="protein sequence ID" value="AAZ90616.1"/>
    <property type="molecule type" value="Genomic_DNA"/>
</dbReference>
<dbReference type="RefSeq" id="WP_000208242.1">
    <property type="nucleotide sequence ID" value="NC_007384.1"/>
</dbReference>
<dbReference type="SMR" id="Q3YV46"/>
<dbReference type="MEROPS" id="T01.006"/>
<dbReference type="GeneID" id="93777966"/>
<dbReference type="KEGG" id="ssn:SSON_4101"/>
<dbReference type="HOGENOM" id="CLU_093872_1_0_6"/>
<dbReference type="Proteomes" id="UP000002529">
    <property type="component" value="Chromosome"/>
</dbReference>
<dbReference type="GO" id="GO:0009376">
    <property type="term" value="C:HslUV protease complex"/>
    <property type="evidence" value="ECO:0007669"/>
    <property type="project" value="UniProtKB-UniRule"/>
</dbReference>
<dbReference type="GO" id="GO:0005839">
    <property type="term" value="C:proteasome core complex"/>
    <property type="evidence" value="ECO:0007669"/>
    <property type="project" value="InterPro"/>
</dbReference>
<dbReference type="GO" id="GO:0046872">
    <property type="term" value="F:metal ion binding"/>
    <property type="evidence" value="ECO:0007669"/>
    <property type="project" value="UniProtKB-KW"/>
</dbReference>
<dbReference type="GO" id="GO:0004298">
    <property type="term" value="F:threonine-type endopeptidase activity"/>
    <property type="evidence" value="ECO:0007669"/>
    <property type="project" value="UniProtKB-KW"/>
</dbReference>
<dbReference type="GO" id="GO:0051603">
    <property type="term" value="P:proteolysis involved in protein catabolic process"/>
    <property type="evidence" value="ECO:0007669"/>
    <property type="project" value="InterPro"/>
</dbReference>
<dbReference type="CDD" id="cd01913">
    <property type="entry name" value="protease_HslV"/>
    <property type="match status" value="1"/>
</dbReference>
<dbReference type="FunFam" id="3.60.20.10:FF:000002">
    <property type="entry name" value="ATP-dependent protease subunit HslV"/>
    <property type="match status" value="1"/>
</dbReference>
<dbReference type="Gene3D" id="3.60.20.10">
    <property type="entry name" value="Glutamine Phosphoribosylpyrophosphate, subunit 1, domain 1"/>
    <property type="match status" value="1"/>
</dbReference>
<dbReference type="HAMAP" id="MF_00248">
    <property type="entry name" value="HslV"/>
    <property type="match status" value="1"/>
</dbReference>
<dbReference type="InterPro" id="IPR022281">
    <property type="entry name" value="ATP-dep_Prtase_HsIV_su"/>
</dbReference>
<dbReference type="InterPro" id="IPR029055">
    <property type="entry name" value="Ntn_hydrolases_N"/>
</dbReference>
<dbReference type="InterPro" id="IPR001353">
    <property type="entry name" value="Proteasome_sua/b"/>
</dbReference>
<dbReference type="InterPro" id="IPR023333">
    <property type="entry name" value="Proteasome_suB-type"/>
</dbReference>
<dbReference type="NCBIfam" id="TIGR03692">
    <property type="entry name" value="ATP_dep_HslV"/>
    <property type="match status" value="1"/>
</dbReference>
<dbReference type="NCBIfam" id="NF003964">
    <property type="entry name" value="PRK05456.1"/>
    <property type="match status" value="1"/>
</dbReference>
<dbReference type="PANTHER" id="PTHR32194:SF0">
    <property type="entry name" value="ATP-DEPENDENT PROTEASE SUBUNIT HSLV"/>
    <property type="match status" value="1"/>
</dbReference>
<dbReference type="PANTHER" id="PTHR32194">
    <property type="entry name" value="METALLOPROTEASE TLDD"/>
    <property type="match status" value="1"/>
</dbReference>
<dbReference type="Pfam" id="PF00227">
    <property type="entry name" value="Proteasome"/>
    <property type="match status" value="1"/>
</dbReference>
<dbReference type="PIRSF" id="PIRSF039093">
    <property type="entry name" value="HslV"/>
    <property type="match status" value="1"/>
</dbReference>
<dbReference type="SUPFAM" id="SSF56235">
    <property type="entry name" value="N-terminal nucleophile aminohydrolases (Ntn hydrolases)"/>
    <property type="match status" value="1"/>
</dbReference>
<dbReference type="PROSITE" id="PS51476">
    <property type="entry name" value="PROTEASOME_BETA_2"/>
    <property type="match status" value="1"/>
</dbReference>
<sequence>MTTIVSVRRNGHVVIAGDGQATLGNTVMKGNVKKVRRLYNDKVIAGFAGGTADAFTLFELFERKLEMHQGHLVKAAVELAKDWRTDRMLRKLEALLAVADETASLIITGNGDVVQPENDLIAIGSGGPYAQAAARALLENTELSAREIAEKALDIAGDICIYTNHFHTIEELSYKA</sequence>